<organism>
    <name type="scientific">Methylobacterium sp. (strain 4-46)</name>
    <dbReference type="NCBI Taxonomy" id="426117"/>
    <lineage>
        <taxon>Bacteria</taxon>
        <taxon>Pseudomonadati</taxon>
        <taxon>Pseudomonadota</taxon>
        <taxon>Alphaproteobacteria</taxon>
        <taxon>Hyphomicrobiales</taxon>
        <taxon>Methylobacteriaceae</taxon>
        <taxon>Methylobacterium</taxon>
    </lineage>
</organism>
<protein>
    <recommendedName>
        <fullName evidence="1">Ketol-acid reductoisomerase (NADP(+))</fullName>
        <shortName evidence="1">KARI</shortName>
        <ecNumber evidence="1">1.1.1.86</ecNumber>
    </recommendedName>
    <alternativeName>
        <fullName evidence="1">Acetohydroxy-acid isomeroreductase</fullName>
        <shortName evidence="1">AHIR</shortName>
    </alternativeName>
    <alternativeName>
        <fullName evidence="1">Alpha-keto-beta-hydroxylacyl reductoisomerase</fullName>
    </alternativeName>
    <alternativeName>
        <fullName evidence="1">Ketol-acid reductoisomerase type 1</fullName>
    </alternativeName>
    <alternativeName>
        <fullName evidence="1">Ketol-acid reductoisomerase type I</fullName>
    </alternativeName>
</protein>
<evidence type="ECO:0000255" key="1">
    <source>
        <dbReference type="HAMAP-Rule" id="MF_00435"/>
    </source>
</evidence>
<evidence type="ECO:0000255" key="2">
    <source>
        <dbReference type="PROSITE-ProRule" id="PRU01197"/>
    </source>
</evidence>
<evidence type="ECO:0000255" key="3">
    <source>
        <dbReference type="PROSITE-ProRule" id="PRU01198"/>
    </source>
</evidence>
<feature type="chain" id="PRO_1000124311" description="Ketol-acid reductoisomerase (NADP(+))">
    <location>
        <begin position="1"/>
        <end position="339"/>
    </location>
</feature>
<feature type="domain" description="KARI N-terminal Rossmann" evidence="2">
    <location>
        <begin position="1"/>
        <end position="182"/>
    </location>
</feature>
<feature type="domain" description="KARI C-terminal knotted" evidence="3">
    <location>
        <begin position="183"/>
        <end position="328"/>
    </location>
</feature>
<feature type="active site" evidence="1">
    <location>
        <position position="108"/>
    </location>
</feature>
<feature type="binding site" evidence="1">
    <location>
        <begin position="24"/>
        <end position="27"/>
    </location>
    <ligand>
        <name>NADP(+)</name>
        <dbReference type="ChEBI" id="CHEBI:58349"/>
    </ligand>
</feature>
<feature type="binding site" evidence="1">
    <location>
        <position position="48"/>
    </location>
    <ligand>
        <name>NADP(+)</name>
        <dbReference type="ChEBI" id="CHEBI:58349"/>
    </ligand>
</feature>
<feature type="binding site" evidence="1">
    <location>
        <position position="51"/>
    </location>
    <ligand>
        <name>NADP(+)</name>
        <dbReference type="ChEBI" id="CHEBI:58349"/>
    </ligand>
</feature>
<feature type="binding site" evidence="1">
    <location>
        <position position="53"/>
    </location>
    <ligand>
        <name>NADP(+)</name>
        <dbReference type="ChEBI" id="CHEBI:58349"/>
    </ligand>
</feature>
<feature type="binding site" evidence="1">
    <location>
        <begin position="83"/>
        <end position="86"/>
    </location>
    <ligand>
        <name>NADP(+)</name>
        <dbReference type="ChEBI" id="CHEBI:58349"/>
    </ligand>
</feature>
<feature type="binding site" evidence="1">
    <location>
        <position position="134"/>
    </location>
    <ligand>
        <name>NADP(+)</name>
        <dbReference type="ChEBI" id="CHEBI:58349"/>
    </ligand>
</feature>
<feature type="binding site" evidence="1">
    <location>
        <position position="191"/>
    </location>
    <ligand>
        <name>Mg(2+)</name>
        <dbReference type="ChEBI" id="CHEBI:18420"/>
        <label>1</label>
    </ligand>
</feature>
<feature type="binding site" evidence="1">
    <location>
        <position position="191"/>
    </location>
    <ligand>
        <name>Mg(2+)</name>
        <dbReference type="ChEBI" id="CHEBI:18420"/>
        <label>2</label>
    </ligand>
</feature>
<feature type="binding site" evidence="1">
    <location>
        <position position="195"/>
    </location>
    <ligand>
        <name>Mg(2+)</name>
        <dbReference type="ChEBI" id="CHEBI:18420"/>
        <label>1</label>
    </ligand>
</feature>
<feature type="binding site" evidence="1">
    <location>
        <position position="227"/>
    </location>
    <ligand>
        <name>Mg(2+)</name>
        <dbReference type="ChEBI" id="CHEBI:18420"/>
        <label>2</label>
    </ligand>
</feature>
<feature type="binding site" evidence="1">
    <location>
        <position position="231"/>
    </location>
    <ligand>
        <name>Mg(2+)</name>
        <dbReference type="ChEBI" id="CHEBI:18420"/>
        <label>2</label>
    </ligand>
</feature>
<feature type="binding site" evidence="1">
    <location>
        <position position="252"/>
    </location>
    <ligand>
        <name>substrate</name>
    </ligand>
</feature>
<reference key="1">
    <citation type="submission" date="2008-02" db="EMBL/GenBank/DDBJ databases">
        <title>Complete sequence of chromosome of Methylobacterium sp. 4-46.</title>
        <authorList>
            <consortium name="US DOE Joint Genome Institute"/>
            <person name="Copeland A."/>
            <person name="Lucas S."/>
            <person name="Lapidus A."/>
            <person name="Glavina del Rio T."/>
            <person name="Dalin E."/>
            <person name="Tice H."/>
            <person name="Bruce D."/>
            <person name="Goodwin L."/>
            <person name="Pitluck S."/>
            <person name="Chertkov O."/>
            <person name="Brettin T."/>
            <person name="Detter J.C."/>
            <person name="Han C."/>
            <person name="Kuske C.R."/>
            <person name="Schmutz J."/>
            <person name="Larimer F."/>
            <person name="Land M."/>
            <person name="Hauser L."/>
            <person name="Kyrpides N."/>
            <person name="Ivanova N."/>
            <person name="Marx C.J."/>
            <person name="Richardson P."/>
        </authorList>
    </citation>
    <scope>NUCLEOTIDE SEQUENCE [LARGE SCALE GENOMIC DNA]</scope>
    <source>
        <strain>4-46</strain>
    </source>
</reference>
<gene>
    <name evidence="1" type="primary">ilvC</name>
    <name type="ordered locus">M446_3416</name>
</gene>
<keyword id="KW-0028">Amino-acid biosynthesis</keyword>
<keyword id="KW-0100">Branched-chain amino acid biosynthesis</keyword>
<keyword id="KW-0460">Magnesium</keyword>
<keyword id="KW-0479">Metal-binding</keyword>
<keyword id="KW-0521">NADP</keyword>
<keyword id="KW-0560">Oxidoreductase</keyword>
<proteinExistence type="inferred from homology"/>
<name>ILVC_METS4</name>
<accession>B0U8N5</accession>
<dbReference type="EC" id="1.1.1.86" evidence="1"/>
<dbReference type="EMBL" id="CP000943">
    <property type="protein sequence ID" value="ACA17805.1"/>
    <property type="molecule type" value="Genomic_DNA"/>
</dbReference>
<dbReference type="RefSeq" id="WP_012333204.1">
    <property type="nucleotide sequence ID" value="NC_010511.1"/>
</dbReference>
<dbReference type="SMR" id="B0U8N5"/>
<dbReference type="STRING" id="426117.M446_3416"/>
<dbReference type="KEGG" id="met:M446_3416"/>
<dbReference type="eggNOG" id="COG0059">
    <property type="taxonomic scope" value="Bacteria"/>
</dbReference>
<dbReference type="HOGENOM" id="CLU_033821_0_1_5"/>
<dbReference type="UniPathway" id="UPA00047">
    <property type="reaction ID" value="UER00056"/>
</dbReference>
<dbReference type="UniPathway" id="UPA00049">
    <property type="reaction ID" value="UER00060"/>
</dbReference>
<dbReference type="GO" id="GO:0005829">
    <property type="term" value="C:cytosol"/>
    <property type="evidence" value="ECO:0007669"/>
    <property type="project" value="TreeGrafter"/>
</dbReference>
<dbReference type="GO" id="GO:0004455">
    <property type="term" value="F:ketol-acid reductoisomerase activity"/>
    <property type="evidence" value="ECO:0007669"/>
    <property type="project" value="UniProtKB-UniRule"/>
</dbReference>
<dbReference type="GO" id="GO:0000287">
    <property type="term" value="F:magnesium ion binding"/>
    <property type="evidence" value="ECO:0007669"/>
    <property type="project" value="UniProtKB-UniRule"/>
</dbReference>
<dbReference type="GO" id="GO:0050661">
    <property type="term" value="F:NADP binding"/>
    <property type="evidence" value="ECO:0007669"/>
    <property type="project" value="InterPro"/>
</dbReference>
<dbReference type="GO" id="GO:0009097">
    <property type="term" value="P:isoleucine biosynthetic process"/>
    <property type="evidence" value="ECO:0007669"/>
    <property type="project" value="UniProtKB-UniRule"/>
</dbReference>
<dbReference type="GO" id="GO:0009099">
    <property type="term" value="P:L-valine biosynthetic process"/>
    <property type="evidence" value="ECO:0007669"/>
    <property type="project" value="UniProtKB-UniRule"/>
</dbReference>
<dbReference type="FunFam" id="3.40.50.720:FF:000023">
    <property type="entry name" value="Ketol-acid reductoisomerase (NADP(+))"/>
    <property type="match status" value="1"/>
</dbReference>
<dbReference type="Gene3D" id="6.10.240.10">
    <property type="match status" value="1"/>
</dbReference>
<dbReference type="Gene3D" id="3.40.50.720">
    <property type="entry name" value="NAD(P)-binding Rossmann-like Domain"/>
    <property type="match status" value="1"/>
</dbReference>
<dbReference type="HAMAP" id="MF_00435">
    <property type="entry name" value="IlvC"/>
    <property type="match status" value="1"/>
</dbReference>
<dbReference type="InterPro" id="IPR008927">
    <property type="entry name" value="6-PGluconate_DH-like_C_sf"/>
</dbReference>
<dbReference type="InterPro" id="IPR013023">
    <property type="entry name" value="KARI"/>
</dbReference>
<dbReference type="InterPro" id="IPR000506">
    <property type="entry name" value="KARI_C"/>
</dbReference>
<dbReference type="InterPro" id="IPR013116">
    <property type="entry name" value="KARI_N"/>
</dbReference>
<dbReference type="InterPro" id="IPR014359">
    <property type="entry name" value="KARI_prok"/>
</dbReference>
<dbReference type="InterPro" id="IPR036291">
    <property type="entry name" value="NAD(P)-bd_dom_sf"/>
</dbReference>
<dbReference type="NCBIfam" id="TIGR00465">
    <property type="entry name" value="ilvC"/>
    <property type="match status" value="1"/>
</dbReference>
<dbReference type="NCBIfam" id="NF004017">
    <property type="entry name" value="PRK05479.1"/>
    <property type="match status" value="1"/>
</dbReference>
<dbReference type="NCBIfam" id="NF009940">
    <property type="entry name" value="PRK13403.1"/>
    <property type="match status" value="1"/>
</dbReference>
<dbReference type="PANTHER" id="PTHR21371">
    <property type="entry name" value="KETOL-ACID REDUCTOISOMERASE, MITOCHONDRIAL"/>
    <property type="match status" value="1"/>
</dbReference>
<dbReference type="PANTHER" id="PTHR21371:SF1">
    <property type="entry name" value="KETOL-ACID REDUCTOISOMERASE, MITOCHONDRIAL"/>
    <property type="match status" value="1"/>
</dbReference>
<dbReference type="Pfam" id="PF01450">
    <property type="entry name" value="KARI_C"/>
    <property type="match status" value="1"/>
</dbReference>
<dbReference type="Pfam" id="PF07991">
    <property type="entry name" value="KARI_N"/>
    <property type="match status" value="1"/>
</dbReference>
<dbReference type="PIRSF" id="PIRSF000116">
    <property type="entry name" value="IlvC_gammaproteo"/>
    <property type="match status" value="1"/>
</dbReference>
<dbReference type="SUPFAM" id="SSF48179">
    <property type="entry name" value="6-phosphogluconate dehydrogenase C-terminal domain-like"/>
    <property type="match status" value="1"/>
</dbReference>
<dbReference type="SUPFAM" id="SSF51735">
    <property type="entry name" value="NAD(P)-binding Rossmann-fold domains"/>
    <property type="match status" value="1"/>
</dbReference>
<dbReference type="PROSITE" id="PS51851">
    <property type="entry name" value="KARI_C"/>
    <property type="match status" value="1"/>
</dbReference>
<dbReference type="PROSITE" id="PS51850">
    <property type="entry name" value="KARI_N"/>
    <property type="match status" value="1"/>
</dbReference>
<comment type="function">
    <text evidence="1">Involved in the biosynthesis of branched-chain amino acids (BCAA). Catalyzes an alkyl-migration followed by a ketol-acid reduction of (S)-2-acetolactate (S2AL) to yield (R)-2,3-dihydroxy-isovalerate. In the isomerase reaction, S2AL is rearranged via a Mg-dependent methyl migration to produce 3-hydroxy-3-methyl-2-ketobutyrate (HMKB). In the reductase reaction, this 2-ketoacid undergoes a metal-dependent reduction by NADPH to yield (R)-2,3-dihydroxy-isovalerate.</text>
</comment>
<comment type="catalytic activity">
    <reaction evidence="1">
        <text>(2R)-2,3-dihydroxy-3-methylbutanoate + NADP(+) = (2S)-2-acetolactate + NADPH + H(+)</text>
        <dbReference type="Rhea" id="RHEA:22068"/>
        <dbReference type="ChEBI" id="CHEBI:15378"/>
        <dbReference type="ChEBI" id="CHEBI:49072"/>
        <dbReference type="ChEBI" id="CHEBI:57783"/>
        <dbReference type="ChEBI" id="CHEBI:58349"/>
        <dbReference type="ChEBI" id="CHEBI:58476"/>
        <dbReference type="EC" id="1.1.1.86"/>
    </reaction>
</comment>
<comment type="catalytic activity">
    <reaction evidence="1">
        <text>(2R,3R)-2,3-dihydroxy-3-methylpentanoate + NADP(+) = (S)-2-ethyl-2-hydroxy-3-oxobutanoate + NADPH + H(+)</text>
        <dbReference type="Rhea" id="RHEA:13493"/>
        <dbReference type="ChEBI" id="CHEBI:15378"/>
        <dbReference type="ChEBI" id="CHEBI:49256"/>
        <dbReference type="ChEBI" id="CHEBI:49258"/>
        <dbReference type="ChEBI" id="CHEBI:57783"/>
        <dbReference type="ChEBI" id="CHEBI:58349"/>
        <dbReference type="EC" id="1.1.1.86"/>
    </reaction>
</comment>
<comment type="cofactor">
    <cofactor evidence="1">
        <name>Mg(2+)</name>
        <dbReference type="ChEBI" id="CHEBI:18420"/>
    </cofactor>
    <text evidence="1">Binds 2 magnesium ions per subunit.</text>
</comment>
<comment type="pathway">
    <text evidence="1">Amino-acid biosynthesis; L-isoleucine biosynthesis; L-isoleucine from 2-oxobutanoate: step 2/4.</text>
</comment>
<comment type="pathway">
    <text evidence="1">Amino-acid biosynthesis; L-valine biosynthesis; L-valine from pyruvate: step 2/4.</text>
</comment>
<comment type="similarity">
    <text evidence="1">Belongs to the ketol-acid reductoisomerase family.</text>
</comment>
<sequence>MRVYYDRDADINLIKGKKVVIVGYGSQGHAHALNLRDSGVKDIVIALRKGSASAKKAEAEGFKVMEVAEAAAQADVVMMLTPDELQGDIYRESLHGQMKQGAALLFAHGLNVHFNLIEPRKDLDVLMVAPKGPGHTVRSEYLRGGGVPTLIAIAQDASGNAHDLGLSYASANGGGRAGIIETTFKEECETDLFGEQVVLCGGLVELIKAGFETLVEAGYAPEMAYFECLHEVKLIVDLIYEGGIANMNYSISNTAEYGEYVTGPRIITPETKAEMKRVLTDIQSGTFTRNWMLENKVNQTSFKATRARNAAHPIEEVGERLRGMMPWIKEKALVDKTKN</sequence>